<organism>
    <name type="scientific">Acidianus two-tailed virus</name>
    <name type="common">ATV</name>
    <dbReference type="NCBI Taxonomy" id="315953"/>
    <lineage>
        <taxon>Viruses</taxon>
        <taxon>Viruses incertae sedis</taxon>
        <taxon>Bicaudaviridae</taxon>
        <taxon>Bicaudavirus</taxon>
    </lineage>
</organism>
<sequence length="326" mass="37906">MKFGGYFTKSVDDLKIDEELSKLIPENTMSDKIKNEIQKYGFLYPVIIDQNGFVIDGYTRVRIAKELGIKEVPVIVYIFDSPEERMRSAIQLNVIRRHLTHEQIEQLYQKYLSTGLSPKEAVKKLDKELKQENIRIKNLEPKMRAVEILQSEAPELFELLAKYQLDPQLLLQFYLSIKEFYDYFKQLPEEKKLEILRSERLLLQVEAEPALLKQFAEAEKFASSVTSVPTTEQEDNGDLESFYRGVDGNEEELIRSKEELNEALEQMGLGTEEEEAENQDEQLFSEFIEELKSGSVTAVPKSIEVYKKENGRLIKIEGEIYLKRKS</sequence>
<evidence type="ECO:0000305" key="1"/>
<dbReference type="EMBL" id="AJ888457">
    <property type="protein sequence ID" value="CAI59914.1"/>
    <property type="molecule type" value="Genomic_DNA"/>
</dbReference>
<dbReference type="RefSeq" id="YP_319901.1">
    <property type="nucleotide sequence ID" value="NC_007409.1"/>
</dbReference>
<dbReference type="SMR" id="Q3V4Q0"/>
<dbReference type="GeneID" id="4484270"/>
<dbReference type="KEGG" id="vg:4484270"/>
<dbReference type="Proteomes" id="UP000002150">
    <property type="component" value="Genome"/>
</dbReference>
<dbReference type="CDD" id="cd16404">
    <property type="entry name" value="pNOB8_ParB_N_like"/>
    <property type="match status" value="1"/>
</dbReference>
<dbReference type="Gene3D" id="3.90.1530.10">
    <property type="entry name" value="Conserved hypothetical protein from pyrococcus furiosus pfu- 392566-001, ParB domain"/>
    <property type="match status" value="1"/>
</dbReference>
<dbReference type="InterPro" id="IPR003115">
    <property type="entry name" value="ParB/Sulfiredoxin_dom"/>
</dbReference>
<dbReference type="InterPro" id="IPR036086">
    <property type="entry name" value="ParB/Sulfiredoxin_sf"/>
</dbReference>
<dbReference type="Pfam" id="PF02195">
    <property type="entry name" value="ParBc"/>
    <property type="match status" value="1"/>
</dbReference>
<dbReference type="SMART" id="SM00470">
    <property type="entry name" value="ParB"/>
    <property type="match status" value="1"/>
</dbReference>
<dbReference type="SUPFAM" id="SSF110849">
    <property type="entry name" value="ParB/Sulfiredoxin"/>
    <property type="match status" value="1"/>
</dbReference>
<proteinExistence type="inferred from homology"/>
<reference key="1">
    <citation type="journal article" date="2005" name="Nature">
        <title>Virology: independent virus development outside a host.</title>
        <authorList>
            <person name="Haring M."/>
            <person name="Vestergaard G."/>
            <person name="Rachel R."/>
            <person name="Chen L."/>
            <person name="Garrett R.A."/>
            <person name="Prangishvili D."/>
        </authorList>
    </citation>
    <scope>NUCLEOTIDE SEQUENCE [GENOMIC DNA]</scope>
</reference>
<keyword id="KW-1185">Reference proteome</keyword>
<protein>
    <recommendedName>
        <fullName>Uncharacterized protein ORF326b</fullName>
    </recommendedName>
</protein>
<organismHost>
    <name type="scientific">Acidianus convivator</name>
    <dbReference type="NCBI Taxonomy" id="269667"/>
</organismHost>
<name>Y326B_ATV</name>
<feature type="chain" id="PRO_0000389165" description="Uncharacterized protein ORF326b">
    <location>
        <begin position="1"/>
        <end position="326"/>
    </location>
</feature>
<accession>Q3V4Q0</accession>
<comment type="similarity">
    <text evidence="1">Belongs to the ParB family.</text>
</comment>